<name>ATPB_STRT2</name>
<protein>
    <recommendedName>
        <fullName evidence="1">ATP synthase subunit beta</fullName>
        <ecNumber evidence="1">7.1.2.2</ecNumber>
    </recommendedName>
    <alternativeName>
        <fullName evidence="1">ATP synthase F1 sector subunit beta</fullName>
    </alternativeName>
    <alternativeName>
        <fullName evidence="1">F-ATPase subunit beta</fullName>
    </alternativeName>
</protein>
<keyword id="KW-0066">ATP synthesis</keyword>
<keyword id="KW-0067">ATP-binding</keyword>
<keyword id="KW-1003">Cell membrane</keyword>
<keyword id="KW-0139">CF(1)</keyword>
<keyword id="KW-0375">Hydrogen ion transport</keyword>
<keyword id="KW-0406">Ion transport</keyword>
<keyword id="KW-0472">Membrane</keyword>
<keyword id="KW-0547">Nucleotide-binding</keyword>
<keyword id="KW-1185">Reference proteome</keyword>
<keyword id="KW-1278">Translocase</keyword>
<keyword id="KW-0813">Transport</keyword>
<evidence type="ECO:0000255" key="1">
    <source>
        <dbReference type="HAMAP-Rule" id="MF_01347"/>
    </source>
</evidence>
<comment type="function">
    <text evidence="1">Produces ATP from ADP in the presence of a proton gradient across the membrane. The catalytic sites are hosted primarily by the beta subunits.</text>
</comment>
<comment type="catalytic activity">
    <reaction evidence="1">
        <text>ATP + H2O + 4 H(+)(in) = ADP + phosphate + 5 H(+)(out)</text>
        <dbReference type="Rhea" id="RHEA:57720"/>
        <dbReference type="ChEBI" id="CHEBI:15377"/>
        <dbReference type="ChEBI" id="CHEBI:15378"/>
        <dbReference type="ChEBI" id="CHEBI:30616"/>
        <dbReference type="ChEBI" id="CHEBI:43474"/>
        <dbReference type="ChEBI" id="CHEBI:456216"/>
        <dbReference type="EC" id="7.1.2.2"/>
    </reaction>
</comment>
<comment type="subunit">
    <text evidence="1">F-type ATPases have 2 components, CF(1) - the catalytic core - and CF(0) - the membrane proton channel. CF(1) has five subunits: alpha(3), beta(3), gamma(1), delta(1), epsilon(1). CF(0) has three main subunits: a(1), b(2) and c(9-12). The alpha and beta chains form an alternating ring which encloses part of the gamma chain. CF(1) is attached to CF(0) by a central stalk formed by the gamma and epsilon chains, while a peripheral stalk is formed by the delta and b chains.</text>
</comment>
<comment type="subcellular location">
    <subcellularLocation>
        <location evidence="1">Cell membrane</location>
        <topology evidence="1">Peripheral membrane protein</topology>
    </subcellularLocation>
</comment>
<comment type="similarity">
    <text evidence="1">Belongs to the ATPase alpha/beta chains family.</text>
</comment>
<dbReference type="EC" id="7.1.2.2" evidence="1"/>
<dbReference type="EMBL" id="CP000023">
    <property type="protein sequence ID" value="AAV60194.1"/>
    <property type="molecule type" value="Genomic_DNA"/>
</dbReference>
<dbReference type="RefSeq" id="WP_011225597.1">
    <property type="nucleotide sequence ID" value="NC_006448.1"/>
</dbReference>
<dbReference type="SMR" id="Q5M5J1"/>
<dbReference type="STRING" id="264199.stu0484"/>
<dbReference type="KEGG" id="stl:stu0484"/>
<dbReference type="PATRIC" id="fig|264199.4.peg.487"/>
<dbReference type="eggNOG" id="COG0055">
    <property type="taxonomic scope" value="Bacteria"/>
</dbReference>
<dbReference type="HOGENOM" id="CLU_022398_0_2_9"/>
<dbReference type="Proteomes" id="UP000001170">
    <property type="component" value="Chromosome"/>
</dbReference>
<dbReference type="GO" id="GO:0005886">
    <property type="term" value="C:plasma membrane"/>
    <property type="evidence" value="ECO:0007669"/>
    <property type="project" value="UniProtKB-SubCell"/>
</dbReference>
<dbReference type="GO" id="GO:0045259">
    <property type="term" value="C:proton-transporting ATP synthase complex"/>
    <property type="evidence" value="ECO:0007669"/>
    <property type="project" value="UniProtKB-KW"/>
</dbReference>
<dbReference type="GO" id="GO:0005524">
    <property type="term" value="F:ATP binding"/>
    <property type="evidence" value="ECO:0007669"/>
    <property type="project" value="UniProtKB-UniRule"/>
</dbReference>
<dbReference type="GO" id="GO:0016887">
    <property type="term" value="F:ATP hydrolysis activity"/>
    <property type="evidence" value="ECO:0007669"/>
    <property type="project" value="InterPro"/>
</dbReference>
<dbReference type="GO" id="GO:0046933">
    <property type="term" value="F:proton-transporting ATP synthase activity, rotational mechanism"/>
    <property type="evidence" value="ECO:0007669"/>
    <property type="project" value="UniProtKB-UniRule"/>
</dbReference>
<dbReference type="CDD" id="cd18110">
    <property type="entry name" value="ATP-synt_F1_beta_C"/>
    <property type="match status" value="1"/>
</dbReference>
<dbReference type="CDD" id="cd18115">
    <property type="entry name" value="ATP-synt_F1_beta_N"/>
    <property type="match status" value="1"/>
</dbReference>
<dbReference type="CDD" id="cd01133">
    <property type="entry name" value="F1-ATPase_beta_CD"/>
    <property type="match status" value="1"/>
</dbReference>
<dbReference type="FunFam" id="1.10.1140.10:FF:000001">
    <property type="entry name" value="ATP synthase subunit beta"/>
    <property type="match status" value="1"/>
</dbReference>
<dbReference type="FunFam" id="2.40.10.170:FF:000005">
    <property type="entry name" value="ATP synthase subunit beta"/>
    <property type="match status" value="1"/>
</dbReference>
<dbReference type="FunFam" id="3.40.50.300:FF:000004">
    <property type="entry name" value="ATP synthase subunit beta"/>
    <property type="match status" value="1"/>
</dbReference>
<dbReference type="Gene3D" id="2.40.10.170">
    <property type="match status" value="1"/>
</dbReference>
<dbReference type="Gene3D" id="1.10.1140.10">
    <property type="entry name" value="Bovine Mitochondrial F1-atpase, Atp Synthase Beta Chain, Chain D, domain 3"/>
    <property type="match status" value="1"/>
</dbReference>
<dbReference type="Gene3D" id="3.40.50.300">
    <property type="entry name" value="P-loop containing nucleotide triphosphate hydrolases"/>
    <property type="match status" value="1"/>
</dbReference>
<dbReference type="HAMAP" id="MF_01347">
    <property type="entry name" value="ATP_synth_beta_bact"/>
    <property type="match status" value="1"/>
</dbReference>
<dbReference type="InterPro" id="IPR003593">
    <property type="entry name" value="AAA+_ATPase"/>
</dbReference>
<dbReference type="InterPro" id="IPR055190">
    <property type="entry name" value="ATP-synt_VA_C"/>
</dbReference>
<dbReference type="InterPro" id="IPR005722">
    <property type="entry name" value="ATP_synth_F1_bsu"/>
</dbReference>
<dbReference type="InterPro" id="IPR020003">
    <property type="entry name" value="ATPase_a/bsu_AS"/>
</dbReference>
<dbReference type="InterPro" id="IPR050053">
    <property type="entry name" value="ATPase_alpha/beta_chains"/>
</dbReference>
<dbReference type="InterPro" id="IPR004100">
    <property type="entry name" value="ATPase_F1/V1/A1_a/bsu_N"/>
</dbReference>
<dbReference type="InterPro" id="IPR036121">
    <property type="entry name" value="ATPase_F1/V1/A1_a/bsu_N_sf"/>
</dbReference>
<dbReference type="InterPro" id="IPR000194">
    <property type="entry name" value="ATPase_F1/V1/A1_a/bsu_nucl-bd"/>
</dbReference>
<dbReference type="InterPro" id="IPR024034">
    <property type="entry name" value="ATPase_F1/V1_b/a_C"/>
</dbReference>
<dbReference type="InterPro" id="IPR027417">
    <property type="entry name" value="P-loop_NTPase"/>
</dbReference>
<dbReference type="NCBIfam" id="TIGR01039">
    <property type="entry name" value="atpD"/>
    <property type="match status" value="1"/>
</dbReference>
<dbReference type="PANTHER" id="PTHR15184">
    <property type="entry name" value="ATP SYNTHASE"/>
    <property type="match status" value="1"/>
</dbReference>
<dbReference type="PANTHER" id="PTHR15184:SF71">
    <property type="entry name" value="ATP SYNTHASE SUBUNIT BETA, MITOCHONDRIAL"/>
    <property type="match status" value="1"/>
</dbReference>
<dbReference type="Pfam" id="PF00006">
    <property type="entry name" value="ATP-synt_ab"/>
    <property type="match status" value="1"/>
</dbReference>
<dbReference type="Pfam" id="PF02874">
    <property type="entry name" value="ATP-synt_ab_N"/>
    <property type="match status" value="1"/>
</dbReference>
<dbReference type="Pfam" id="PF22919">
    <property type="entry name" value="ATP-synt_VA_C"/>
    <property type="match status" value="1"/>
</dbReference>
<dbReference type="SMART" id="SM00382">
    <property type="entry name" value="AAA"/>
    <property type="match status" value="1"/>
</dbReference>
<dbReference type="SUPFAM" id="SSF47917">
    <property type="entry name" value="C-terminal domain of alpha and beta subunits of F1 ATP synthase"/>
    <property type="match status" value="1"/>
</dbReference>
<dbReference type="SUPFAM" id="SSF50615">
    <property type="entry name" value="N-terminal domain of alpha and beta subunits of F1 ATP synthase"/>
    <property type="match status" value="1"/>
</dbReference>
<dbReference type="SUPFAM" id="SSF52540">
    <property type="entry name" value="P-loop containing nucleoside triphosphate hydrolases"/>
    <property type="match status" value="1"/>
</dbReference>
<dbReference type="PROSITE" id="PS00152">
    <property type="entry name" value="ATPASE_ALPHA_BETA"/>
    <property type="match status" value="1"/>
</dbReference>
<reference key="1">
    <citation type="journal article" date="2004" name="Nat. Biotechnol.">
        <title>Complete sequence and comparative genome analysis of the dairy bacterium Streptococcus thermophilus.</title>
        <authorList>
            <person name="Bolotin A."/>
            <person name="Quinquis B."/>
            <person name="Renault P."/>
            <person name="Sorokin A."/>
            <person name="Ehrlich S.D."/>
            <person name="Kulakauskas S."/>
            <person name="Lapidus A."/>
            <person name="Goltsman E."/>
            <person name="Mazur M."/>
            <person name="Pusch G.D."/>
            <person name="Fonstein M."/>
            <person name="Overbeek R."/>
            <person name="Kyprides N."/>
            <person name="Purnelle B."/>
            <person name="Prozzi D."/>
            <person name="Ngui K."/>
            <person name="Masuy D."/>
            <person name="Hancy F."/>
            <person name="Burteau S."/>
            <person name="Boutry M."/>
            <person name="Delcour J."/>
            <person name="Goffeau A."/>
            <person name="Hols P."/>
        </authorList>
    </citation>
    <scope>NUCLEOTIDE SEQUENCE [LARGE SCALE GENOMIC DNA]</scope>
    <source>
        <strain>ATCC BAA-250 / LMG 18311</strain>
    </source>
</reference>
<feature type="chain" id="PRO_0000254400" description="ATP synthase subunit beta">
    <location>
        <begin position="1"/>
        <end position="468"/>
    </location>
</feature>
<feature type="binding site" evidence="1">
    <location>
        <begin position="155"/>
        <end position="162"/>
    </location>
    <ligand>
        <name>ATP</name>
        <dbReference type="ChEBI" id="CHEBI:30616"/>
    </ligand>
</feature>
<accession>Q5M5J1</accession>
<organism>
    <name type="scientific">Streptococcus thermophilus (strain ATCC BAA-250 / LMG 18311)</name>
    <dbReference type="NCBI Taxonomy" id="264199"/>
    <lineage>
        <taxon>Bacteria</taxon>
        <taxon>Bacillati</taxon>
        <taxon>Bacillota</taxon>
        <taxon>Bacilli</taxon>
        <taxon>Lactobacillales</taxon>
        <taxon>Streptococcaceae</taxon>
        <taxon>Streptococcus</taxon>
    </lineage>
</organism>
<proteinExistence type="inferred from homology"/>
<sequence>MSSGKIAQVVGPVVDVAFATGDKLPEINNALVVYTDEEKSRRIVLEVALELGEGVVRTIAMESTDGLTRGLEVLDTGRPISVPVGKETLGRVFNVLGDTIDMEAPFADDAEREPIHKKAPTFDELSTSTEILETGIKVIDLLAPYLKGGKVGLFGGAGVGKTVLIQELIHNIAQEHGGISVFTGVGERSREGNDLYWEMKESGVIEKTAMVFGQMNEPPGARMRVALTGLTIAEYFRDVEGQDVLLFIDNIFRFTQAGSEVSALLGRMPSAVGYQPTLATEMGQLQERITSTKKGSVTSIQAIYVPADDYTDPAPATAFAHLDSTTNLERKLTQMGIYPAVDPLASSSRALSPEIVGEEHYAVATEVQRVLQRYRELQDIIAILGMDELSDEDKTLVARARRIQFFLSQNFNVAEQFTGQPGSYVPVAETVRGFKEILEGKYDNLPEDAFRSVGPIEDVVAKAKAMGY</sequence>
<gene>
    <name evidence="1" type="primary">atpD</name>
    <name type="ordered locus">stu0484</name>
</gene>